<sequence>MKVTFEELKGAFYRVLRSRNIAEDTADKCAEMFARTTESGVYSHGVNRFPRFIQQLDNGDIIPDAKPQRVTSLGAIEQWDAQRAIGNLTAKKMMDRAIELASDHGIGLVALRNANHWMRGGSYGWQAAEKGYIGICWTNSIAVMPPWGAKECRIGTNPLIVAIPSTPITMVDMSMSMFSYGMLEVNRLAGRELPVDGGFDDNGQLTKEPGVIEKNRRILPMGYWKGSGLSIVLDMIATLLSNGSSVAEVTQENSDEYGVSQIFIAIEVDKLIDGATRDAKLQRIMDFITTAERADDNVAIRLPGHEFTKLLDDNRRHGITIDDSVWAKIQAL</sequence>
<comment type="function">
    <text evidence="1">Catalyzes the reduction of 2,3-diketo-L-gulonate in the presence of NADH, to form 3-keto-L-gulonate.</text>
</comment>
<comment type="catalytic activity">
    <reaction evidence="1">
        <text>3-dehydro-L-gulonate + NAD(+) = 2,3-dioxo-L-gulonate + NADH + H(+)</text>
        <dbReference type="Rhea" id="RHEA:21924"/>
        <dbReference type="ChEBI" id="CHEBI:15378"/>
        <dbReference type="ChEBI" id="CHEBI:57441"/>
        <dbReference type="ChEBI" id="CHEBI:57540"/>
        <dbReference type="ChEBI" id="CHEBI:57655"/>
        <dbReference type="ChEBI" id="CHEBI:57945"/>
        <dbReference type="EC" id="1.1.1.130"/>
    </reaction>
</comment>
<comment type="catalytic activity">
    <reaction evidence="1">
        <text>3-dehydro-L-gulonate + NADP(+) = 2,3-dioxo-L-gulonate + NADPH + H(+)</text>
        <dbReference type="Rhea" id="RHEA:21928"/>
        <dbReference type="ChEBI" id="CHEBI:15378"/>
        <dbReference type="ChEBI" id="CHEBI:57441"/>
        <dbReference type="ChEBI" id="CHEBI:57655"/>
        <dbReference type="ChEBI" id="CHEBI:57783"/>
        <dbReference type="ChEBI" id="CHEBI:58349"/>
        <dbReference type="EC" id="1.1.1.130"/>
    </reaction>
</comment>
<comment type="subunit">
    <text evidence="1">Homodimer.</text>
</comment>
<comment type="subcellular location">
    <subcellularLocation>
        <location evidence="1">Cytoplasm</location>
    </subcellularLocation>
</comment>
<comment type="similarity">
    <text evidence="1">Belongs to the LDH2/MDH2 oxidoreductase family. DlgD subfamily.</text>
</comment>
<evidence type="ECO:0000255" key="1">
    <source>
        <dbReference type="HAMAP-Rule" id="MF_00820"/>
    </source>
</evidence>
<organism>
    <name type="scientific">Salmonella newport (strain SL254)</name>
    <dbReference type="NCBI Taxonomy" id="423368"/>
    <lineage>
        <taxon>Bacteria</taxon>
        <taxon>Pseudomonadati</taxon>
        <taxon>Pseudomonadota</taxon>
        <taxon>Gammaproteobacteria</taxon>
        <taxon>Enterobacterales</taxon>
        <taxon>Enterobacteriaceae</taxon>
        <taxon>Salmonella</taxon>
    </lineage>
</organism>
<gene>
    <name evidence="1" type="primary">dlgD</name>
    <name type="ordered locus">SNSL254_A3946</name>
</gene>
<feature type="chain" id="PRO_1000134350" description="2,3-diketo-L-gulonate reductase">
    <location>
        <begin position="1"/>
        <end position="332"/>
    </location>
</feature>
<feature type="active site" description="Proton donor" evidence="1">
    <location>
        <position position="44"/>
    </location>
</feature>
<feature type="binding site" evidence="1">
    <location>
        <begin position="168"/>
        <end position="174"/>
    </location>
    <ligand>
        <name>NAD(+)</name>
        <dbReference type="ChEBI" id="CHEBI:57540"/>
    </ligand>
</feature>
<feature type="binding site" evidence="1">
    <location>
        <begin position="224"/>
        <end position="225"/>
    </location>
    <ligand>
        <name>NAD(+)</name>
        <dbReference type="ChEBI" id="CHEBI:57540"/>
    </ligand>
</feature>
<feature type="binding site" evidence="1">
    <location>
        <begin position="304"/>
        <end position="306"/>
    </location>
    <ligand>
        <name>NAD(+)</name>
        <dbReference type="ChEBI" id="CHEBI:57540"/>
    </ligand>
</feature>
<protein>
    <recommendedName>
        <fullName evidence="1">2,3-diketo-L-gulonate reductase</fullName>
        <shortName evidence="1">2,3-DKG reductase</shortName>
        <ecNumber evidence="1">1.1.1.130</ecNumber>
    </recommendedName>
    <alternativeName>
        <fullName evidence="1">3-dehydro-L-gulonate 2-dehydrogenase</fullName>
    </alternativeName>
</protein>
<dbReference type="EC" id="1.1.1.130" evidence="1"/>
<dbReference type="EMBL" id="CP001113">
    <property type="protein sequence ID" value="ACF62670.1"/>
    <property type="molecule type" value="Genomic_DNA"/>
</dbReference>
<dbReference type="SMR" id="B4SWL6"/>
<dbReference type="KEGG" id="see:SNSL254_A3946"/>
<dbReference type="HOGENOM" id="CLU_040452_4_0_6"/>
<dbReference type="Proteomes" id="UP000008824">
    <property type="component" value="Chromosome"/>
</dbReference>
<dbReference type="GO" id="GO:0005737">
    <property type="term" value="C:cytoplasm"/>
    <property type="evidence" value="ECO:0007669"/>
    <property type="project" value="UniProtKB-SubCell"/>
</dbReference>
<dbReference type="GO" id="GO:0047559">
    <property type="term" value="F:3-dehydro-L-gulonate 2-dehydrogenase activity"/>
    <property type="evidence" value="ECO:0007669"/>
    <property type="project" value="UniProtKB-UniRule"/>
</dbReference>
<dbReference type="GO" id="GO:0070403">
    <property type="term" value="F:NAD+ binding"/>
    <property type="evidence" value="ECO:0007669"/>
    <property type="project" value="InterPro"/>
</dbReference>
<dbReference type="Gene3D" id="1.10.1530.10">
    <property type="match status" value="1"/>
</dbReference>
<dbReference type="Gene3D" id="3.30.1370.60">
    <property type="entry name" value="Hypothetical oxidoreductase yiak, domain 2"/>
    <property type="match status" value="1"/>
</dbReference>
<dbReference type="Gene3D" id="3.30.60.50">
    <property type="entry name" value="Hypothetical oxidoreductase yiak, domain 3"/>
    <property type="match status" value="1"/>
</dbReference>
<dbReference type="HAMAP" id="MF_00820">
    <property type="entry name" value="Diketo_gul_reduc"/>
    <property type="match status" value="1"/>
</dbReference>
<dbReference type="InterPro" id="IPR023689">
    <property type="entry name" value="Diketo_gul_Rdtase"/>
</dbReference>
<dbReference type="InterPro" id="IPR043144">
    <property type="entry name" value="Mal/L-sulf/L-lact_DH-like_ah"/>
</dbReference>
<dbReference type="InterPro" id="IPR043143">
    <property type="entry name" value="Mal/L-sulf/L-lact_DH-like_NADP"/>
</dbReference>
<dbReference type="InterPro" id="IPR036111">
    <property type="entry name" value="Mal/L-sulfo/L-lacto_DH-like_sf"/>
</dbReference>
<dbReference type="InterPro" id="IPR003767">
    <property type="entry name" value="Malate/L-lactate_DH-like"/>
</dbReference>
<dbReference type="NCBIfam" id="NF009750">
    <property type="entry name" value="PRK13260.1"/>
    <property type="match status" value="1"/>
</dbReference>
<dbReference type="PANTHER" id="PTHR11091:SF3">
    <property type="entry name" value="2,3-DIKETO-L-GULONATE REDUCTASE"/>
    <property type="match status" value="1"/>
</dbReference>
<dbReference type="PANTHER" id="PTHR11091">
    <property type="entry name" value="OXIDOREDUCTASE-RELATED"/>
    <property type="match status" value="1"/>
</dbReference>
<dbReference type="Pfam" id="PF02615">
    <property type="entry name" value="Ldh_2"/>
    <property type="match status" value="1"/>
</dbReference>
<dbReference type="SUPFAM" id="SSF89733">
    <property type="entry name" value="L-sulfolactate dehydrogenase-like"/>
    <property type="match status" value="1"/>
</dbReference>
<proteinExistence type="inferred from homology"/>
<accession>B4SWL6</accession>
<keyword id="KW-0963">Cytoplasm</keyword>
<keyword id="KW-0520">NAD</keyword>
<keyword id="KW-0560">Oxidoreductase</keyword>
<reference key="1">
    <citation type="journal article" date="2011" name="J. Bacteriol.">
        <title>Comparative genomics of 28 Salmonella enterica isolates: evidence for CRISPR-mediated adaptive sublineage evolution.</title>
        <authorList>
            <person name="Fricke W.F."/>
            <person name="Mammel M.K."/>
            <person name="McDermott P.F."/>
            <person name="Tartera C."/>
            <person name="White D.G."/>
            <person name="Leclerc J.E."/>
            <person name="Ravel J."/>
            <person name="Cebula T.A."/>
        </authorList>
    </citation>
    <scope>NUCLEOTIDE SEQUENCE [LARGE SCALE GENOMIC DNA]</scope>
    <source>
        <strain>SL254</strain>
    </source>
</reference>
<name>DLGD_SALNS</name>